<protein>
    <recommendedName>
        <fullName>Myosin-6</fullName>
    </recommendedName>
    <alternativeName>
        <fullName>Myosin heavy chain 6</fullName>
    </alternativeName>
    <alternativeName>
        <fullName>Myosin heavy chain, cardiac muscle alpha isoform</fullName>
        <shortName>MyHC-alpha</shortName>
    </alternativeName>
</protein>
<feature type="chain" id="PRO_0000123404" description="Myosin-6">
    <location>
        <begin position="1"/>
        <end position="1938"/>
    </location>
</feature>
<feature type="domain" description="Myosin N-terminal SH3-like" evidence="5">
    <location>
        <begin position="31"/>
        <end position="80"/>
    </location>
</feature>
<feature type="domain" description="Myosin motor" evidence="4">
    <location>
        <begin position="84"/>
        <end position="779"/>
    </location>
</feature>
<feature type="domain" description="IQ" evidence="3">
    <location>
        <begin position="782"/>
        <end position="811"/>
    </location>
</feature>
<feature type="region of interest" description="Actin-binding">
    <location>
        <begin position="656"/>
        <end position="678"/>
    </location>
</feature>
<feature type="region of interest" description="Actin-binding">
    <location>
        <begin position="758"/>
        <end position="772"/>
    </location>
</feature>
<feature type="region of interest" description="Calmodulin-binding" evidence="1">
    <location>
        <begin position="789"/>
        <end position="806"/>
    </location>
</feature>
<feature type="region of interest" description="Calmodulin-binding" evidence="1">
    <location>
        <begin position="815"/>
        <end position="832"/>
    </location>
</feature>
<feature type="region of interest" description="Disordered" evidence="6">
    <location>
        <begin position="1907"/>
        <end position="1938"/>
    </location>
</feature>
<feature type="coiled-coil region" evidence="2">
    <location>
        <begin position="842"/>
        <end position="1938"/>
    </location>
</feature>
<feature type="compositionally biased region" description="Basic and acidic residues" evidence="6">
    <location>
        <begin position="1924"/>
        <end position="1938"/>
    </location>
</feature>
<feature type="binding site">
    <location>
        <begin position="177"/>
        <end position="184"/>
    </location>
    <ligand>
        <name>ATP</name>
        <dbReference type="ChEBI" id="CHEBI:30616"/>
    </ligand>
</feature>
<feature type="modified residue" description="N6,N6,N6-trimethyllysine" evidence="2">
    <location>
        <position position="128"/>
    </location>
</feature>
<feature type="modified residue" description="Phosphothreonine" evidence="8">
    <location>
        <position position="378"/>
    </location>
</feature>
<feature type="modified residue" description="Phosphoserine" evidence="8">
    <location>
        <position position="416"/>
    </location>
</feature>
<feature type="modified residue" description="Phosphoserine" evidence="8">
    <location>
        <position position="1089"/>
    </location>
</feature>
<feature type="modified residue" description="Phosphoserine" evidence="8">
    <location>
        <position position="1138"/>
    </location>
</feature>
<feature type="modified residue" description="Phosphotyrosine" evidence="8">
    <location>
        <position position="1260"/>
    </location>
</feature>
<feature type="modified residue" description="Phosphoserine" evidence="8">
    <location>
        <position position="1270"/>
    </location>
</feature>
<feature type="modified residue" description="Phosphothreonine" evidence="8">
    <location>
        <position position="1276"/>
    </location>
</feature>
<feature type="modified residue" description="Phosphothreonine" evidence="8">
    <location>
        <position position="1283"/>
    </location>
</feature>
<feature type="modified residue" description="Phosphoserine" evidence="8">
    <location>
        <position position="1308"/>
    </location>
</feature>
<feature type="modified residue" description="Phosphotyrosine" evidence="8">
    <location>
        <position position="1309"/>
    </location>
</feature>
<feature type="modified residue" description="Phosphothreonine" evidence="8">
    <location>
        <position position="1310"/>
    </location>
</feature>
<feature type="modified residue" description="Phosphoserine" evidence="8">
    <location>
        <position position="1511"/>
    </location>
</feature>
<feature type="modified residue" description="Phosphothreonine" evidence="8">
    <location>
        <position position="1514"/>
    </location>
</feature>
<feature type="modified residue" description="Phosphothreonine" evidence="8">
    <location>
        <position position="1680"/>
    </location>
</feature>
<feature type="sequence conflict" description="In Ref. 3." evidence="7" ref="3">
    <original>R</original>
    <variation>AP</variation>
    <location>
        <position position="13"/>
    </location>
</feature>
<feature type="sequence conflict" description="In Ref. 3; AAA41648." evidence="7" ref="3">
    <original>V</original>
    <variation>A</variation>
    <location>
        <position position="46"/>
    </location>
</feature>
<feature type="sequence conflict" description="In Ref. 3; AAA41648." evidence="7" ref="3">
    <original>VS</original>
    <variation>AP</variation>
    <location>
        <begin position="51"/>
        <end position="52"/>
    </location>
</feature>
<feature type="sequence conflict" description="In Ref. 3; AAA41648." evidence="7" ref="3">
    <original>E</original>
    <variation>Q</variation>
    <location>
        <position position="87"/>
    </location>
</feature>
<feature type="sequence conflict" description="In Ref. 3; AAA41648." evidence="7" ref="3">
    <location>
        <position position="109"/>
    </location>
</feature>
<feature type="sequence conflict" description="In Ref. 4." evidence="7" ref="4">
    <original>F</original>
    <variation>FF</variation>
    <location>
        <position position="1566"/>
    </location>
</feature>
<feature type="sequence conflict" description="In Ref. 4; AAA41653." evidence="7" ref="4">
    <original>R</original>
    <variation>S</variation>
    <location>
        <position position="1575"/>
    </location>
</feature>
<feature type="sequence conflict" description="In Ref. 4." evidence="7" ref="4">
    <original>N</original>
    <variation>T</variation>
    <location>
        <position position="1721"/>
    </location>
</feature>
<feature type="sequence conflict" description="In Ref. 4; AAA41653." evidence="7" ref="4">
    <original>T</original>
    <variation>N</variation>
    <location>
        <position position="1852"/>
    </location>
</feature>
<feature type="sequence conflict" description="In Ref. 4; AAA41653." evidence="7" ref="4">
    <original>D</original>
    <variation>N</variation>
    <location>
        <position position="1870"/>
    </location>
</feature>
<feature type="sequence conflict" description="In Ref. 4 and 5." evidence="7" ref="4 5">
    <original>M</original>
    <variation>I</variation>
    <location>
        <position position="1934"/>
    </location>
</feature>
<evidence type="ECO:0000250" key="1"/>
<evidence type="ECO:0000255" key="2"/>
<evidence type="ECO:0000255" key="3">
    <source>
        <dbReference type="PROSITE-ProRule" id="PRU00116"/>
    </source>
</evidence>
<evidence type="ECO:0000255" key="4">
    <source>
        <dbReference type="PROSITE-ProRule" id="PRU00782"/>
    </source>
</evidence>
<evidence type="ECO:0000255" key="5">
    <source>
        <dbReference type="PROSITE-ProRule" id="PRU01190"/>
    </source>
</evidence>
<evidence type="ECO:0000256" key="6">
    <source>
        <dbReference type="SAM" id="MobiDB-lite"/>
    </source>
</evidence>
<evidence type="ECO:0000305" key="7"/>
<evidence type="ECO:0007744" key="8">
    <source>
    </source>
</evidence>
<reference key="1">
    <citation type="journal article" date="1989" name="Nucleic Acids Res.">
        <title>Complete nucleotide sequence of full length cDNA for rat alpha cardiac myosin heavy chain.</title>
        <authorList>
            <person name="Kraft R."/>
            <person name="Bravo-Zehnder M."/>
            <person name="Taylor D."/>
            <person name="Leinwand L.A."/>
        </authorList>
    </citation>
    <scope>NUCLEOTIDE SEQUENCE [MRNA]</scope>
    <source>
        <tissue>Heart</tissue>
    </source>
</reference>
<reference key="2">
    <citation type="journal article" date="1989" name="J. Mol. Biol.">
        <title>Full-length rat alpha and beta cardiac myosin heavy chain sequences. Comparisons suggest a molecular basis for functional differences.</title>
        <authorList>
            <person name="McNally E.M."/>
            <person name="Kraft R."/>
            <person name="Bravo-Zehnder M."/>
            <person name="Taylor D."/>
            <person name="Leinwand L.A."/>
        </authorList>
    </citation>
    <scope>DISCUSSION OF SEQUENCE</scope>
</reference>
<reference key="3">
    <citation type="journal article" date="1984" name="Proc. Natl. Acad. Sci. U.S.A.">
        <title>Cardiac alpha- and beta-myosin heavy chain genes are organized in tandem.</title>
        <authorList>
            <person name="Mahdavi V."/>
            <person name="Chambers A.P."/>
            <person name="Nadal-Ginard B."/>
        </authorList>
    </citation>
    <scope>NUCLEOTIDE SEQUENCE [GENOMIC DNA] OF 1-167</scope>
</reference>
<reference key="4">
    <citation type="journal article" date="1982" name="Nature">
        <title>Molecular characterization of two myosin heavy chain genes expressed in the adult heart.</title>
        <authorList>
            <person name="Mahdavi V."/>
            <person name="Periasamy M."/>
            <person name="Nadal-Ginard B."/>
        </authorList>
    </citation>
    <scope>NUCLEOTIDE SEQUENCE [MRNA] OF 1512-1938</scope>
</reference>
<reference key="5">
    <citation type="journal article" date="1984" name="Eur. Heart J.">
        <title>Cardiac myosin heavy chain isozymic transitions during development and under pathological conditions are regulated at the level of mRNA availability.</title>
        <authorList>
            <person name="Mahdavi V."/>
            <person name="Lompre A.M."/>
            <person name="Chambers A.P."/>
            <person name="Nadal-Ginard B."/>
        </authorList>
    </citation>
    <scope>NUCLEOTIDE SEQUENCE OF 1872-1938</scope>
    <source>
        <strain>Wistar</strain>
        <tissue>Heart</tissue>
    </source>
</reference>
<reference key="6">
    <citation type="journal article" date="2012" name="Nat. Commun.">
        <title>Quantitative maps of protein phosphorylation sites across 14 different rat organs and tissues.</title>
        <authorList>
            <person name="Lundby A."/>
            <person name="Secher A."/>
            <person name="Lage K."/>
            <person name="Nordsborg N.B."/>
            <person name="Dmytriyev A."/>
            <person name="Lundby C."/>
            <person name="Olsen J.V."/>
        </authorList>
    </citation>
    <scope>PHOSPHORYLATION [LARGE SCALE ANALYSIS] AT THR-378; SER-416; SER-1089; SER-1138; TYR-1260; SER-1270; THR-1276; THR-1283; SER-1308; TYR-1309; THR-1310; SER-1511; THR-1514 AND THR-1680</scope>
    <scope>IDENTIFICATION BY MASS SPECTROMETRY [LARGE SCALE ANALYSIS]</scope>
</reference>
<name>MYH6_RAT</name>
<gene>
    <name type="primary">Myh6</name>
</gene>
<accession>P02563</accession>
<accession>Q63351</accession>
<keyword id="KW-0009">Actin-binding</keyword>
<keyword id="KW-0067">ATP-binding</keyword>
<keyword id="KW-0112">Calmodulin-binding</keyword>
<keyword id="KW-0175">Coiled coil</keyword>
<keyword id="KW-0963">Cytoplasm</keyword>
<keyword id="KW-0488">Methylation</keyword>
<keyword id="KW-0505">Motor protein</keyword>
<keyword id="KW-0514">Muscle protein</keyword>
<keyword id="KW-0518">Myosin</keyword>
<keyword id="KW-0547">Nucleotide-binding</keyword>
<keyword id="KW-0597">Phosphoprotein</keyword>
<keyword id="KW-1185">Reference proteome</keyword>
<keyword id="KW-0787">Thick filament</keyword>
<proteinExistence type="evidence at protein level"/>
<dbReference type="EMBL" id="X15938">
    <property type="protein sequence ID" value="CAA34064.1"/>
    <property type="molecule type" value="mRNA"/>
</dbReference>
<dbReference type="EMBL" id="K01464">
    <property type="protein sequence ID" value="AAA41648.1"/>
    <property type="molecule type" value="Genomic_DNA"/>
</dbReference>
<dbReference type="EMBL" id="J00751">
    <property type="protein sequence ID" value="AAA41653.1"/>
    <property type="molecule type" value="mRNA"/>
</dbReference>
<dbReference type="EMBL" id="M32697">
    <property type="protein sequence ID" value="AAA41658.1"/>
    <property type="molecule type" value="mRNA"/>
</dbReference>
<dbReference type="PIR" id="S06005">
    <property type="entry name" value="S06005"/>
</dbReference>
<dbReference type="SMR" id="P02563"/>
<dbReference type="DIP" id="DIP-41048N"/>
<dbReference type="FunCoup" id="P02563">
    <property type="interactions" value="397"/>
</dbReference>
<dbReference type="IntAct" id="P02563">
    <property type="interactions" value="2"/>
</dbReference>
<dbReference type="MINT" id="P02563"/>
<dbReference type="STRING" id="10116.ENSRNOP00000023301"/>
<dbReference type="GlyGen" id="P02563">
    <property type="glycosylation" value="47 sites, 1 O-linked glycan (47 sites)"/>
</dbReference>
<dbReference type="iPTMnet" id="P02563"/>
<dbReference type="PhosphoSitePlus" id="P02563"/>
<dbReference type="jPOST" id="P02563"/>
<dbReference type="PaxDb" id="10116-ENSRNOP00000023301"/>
<dbReference type="PeptideAtlas" id="P02563"/>
<dbReference type="UCSC" id="RGD:62029">
    <property type="organism name" value="rat"/>
</dbReference>
<dbReference type="AGR" id="RGD:62029"/>
<dbReference type="AGR" id="RGD:62030"/>
<dbReference type="RGD" id="62029">
    <property type="gene designation" value="Myh6"/>
</dbReference>
<dbReference type="eggNOG" id="KOG0161">
    <property type="taxonomic scope" value="Eukaryota"/>
</dbReference>
<dbReference type="InParanoid" id="P02563"/>
<dbReference type="PhylomeDB" id="P02563"/>
<dbReference type="Reactome" id="R-RNO-390522">
    <property type="pathway name" value="Striated Muscle Contraction"/>
</dbReference>
<dbReference type="PRO" id="PR:P02563"/>
<dbReference type="Proteomes" id="UP000002494">
    <property type="component" value="Unplaced"/>
</dbReference>
<dbReference type="GO" id="GO:0005737">
    <property type="term" value="C:cytoplasm"/>
    <property type="evidence" value="ECO:0000318"/>
    <property type="project" value="GO_Central"/>
</dbReference>
<dbReference type="GO" id="GO:0005859">
    <property type="term" value="C:muscle myosin complex"/>
    <property type="evidence" value="ECO:0000314"/>
    <property type="project" value="RGD"/>
</dbReference>
<dbReference type="GO" id="GO:0030016">
    <property type="term" value="C:myofibril"/>
    <property type="evidence" value="ECO:0000314"/>
    <property type="project" value="RGD"/>
</dbReference>
<dbReference type="GO" id="GO:0016459">
    <property type="term" value="C:myosin complex"/>
    <property type="evidence" value="ECO:0000266"/>
    <property type="project" value="RGD"/>
</dbReference>
<dbReference type="GO" id="GO:0032982">
    <property type="term" value="C:myosin filament"/>
    <property type="evidence" value="ECO:0000318"/>
    <property type="project" value="GO_Central"/>
</dbReference>
<dbReference type="GO" id="GO:0016460">
    <property type="term" value="C:myosin II complex"/>
    <property type="evidence" value="ECO:0000318"/>
    <property type="project" value="GO_Central"/>
</dbReference>
<dbReference type="GO" id="GO:0001725">
    <property type="term" value="C:stress fiber"/>
    <property type="evidence" value="ECO:0000266"/>
    <property type="project" value="RGD"/>
</dbReference>
<dbReference type="GO" id="GO:0030018">
    <property type="term" value="C:Z disc"/>
    <property type="evidence" value="ECO:0000266"/>
    <property type="project" value="RGD"/>
</dbReference>
<dbReference type="GO" id="GO:0051015">
    <property type="term" value="F:actin filament binding"/>
    <property type="evidence" value="ECO:0000318"/>
    <property type="project" value="GO_Central"/>
</dbReference>
<dbReference type="GO" id="GO:0005524">
    <property type="term" value="F:ATP binding"/>
    <property type="evidence" value="ECO:0000314"/>
    <property type="project" value="RGD"/>
</dbReference>
<dbReference type="GO" id="GO:0030899">
    <property type="term" value="F:calcium-dependent ATPase activity"/>
    <property type="evidence" value="ECO:0000315"/>
    <property type="project" value="RGD"/>
</dbReference>
<dbReference type="GO" id="GO:0005516">
    <property type="term" value="F:calmodulin binding"/>
    <property type="evidence" value="ECO:0007669"/>
    <property type="project" value="UniProtKB-KW"/>
</dbReference>
<dbReference type="GO" id="GO:0042802">
    <property type="term" value="F:identical protein binding"/>
    <property type="evidence" value="ECO:0000353"/>
    <property type="project" value="IntAct"/>
</dbReference>
<dbReference type="GO" id="GO:0000146">
    <property type="term" value="F:microfilament motor activity"/>
    <property type="evidence" value="ECO:0000315"/>
    <property type="project" value="RGD"/>
</dbReference>
<dbReference type="GO" id="GO:0019901">
    <property type="term" value="F:protein kinase binding"/>
    <property type="evidence" value="ECO:0000266"/>
    <property type="project" value="RGD"/>
</dbReference>
<dbReference type="GO" id="GO:0044877">
    <property type="term" value="F:protein-containing complex binding"/>
    <property type="evidence" value="ECO:0000314"/>
    <property type="project" value="RGD"/>
</dbReference>
<dbReference type="GO" id="GO:0030048">
    <property type="term" value="P:actin filament-based movement"/>
    <property type="evidence" value="ECO:0000266"/>
    <property type="project" value="RGD"/>
</dbReference>
<dbReference type="GO" id="GO:0007512">
    <property type="term" value="P:adult heart development"/>
    <property type="evidence" value="ECO:0000266"/>
    <property type="project" value="RGD"/>
</dbReference>
<dbReference type="GO" id="GO:0046034">
    <property type="term" value="P:ATP metabolic process"/>
    <property type="evidence" value="ECO:0000266"/>
    <property type="project" value="RGD"/>
</dbReference>
<dbReference type="GO" id="GO:0055009">
    <property type="term" value="P:atrial cardiac muscle tissue morphogenesis"/>
    <property type="evidence" value="ECO:0000266"/>
    <property type="project" value="RGD"/>
</dbReference>
<dbReference type="GO" id="GO:0055013">
    <property type="term" value="P:cardiac muscle cell development"/>
    <property type="evidence" value="ECO:0000266"/>
    <property type="project" value="RGD"/>
</dbReference>
<dbReference type="GO" id="GO:0060048">
    <property type="term" value="P:cardiac muscle contraction"/>
    <property type="evidence" value="ECO:0000266"/>
    <property type="project" value="RGD"/>
</dbReference>
<dbReference type="GO" id="GO:0014898">
    <property type="term" value="P:cardiac muscle hypertrophy in response to stress"/>
    <property type="evidence" value="ECO:0000266"/>
    <property type="project" value="RGD"/>
</dbReference>
<dbReference type="GO" id="GO:1905243">
    <property type="term" value="P:cellular response to 3,3',5-triiodo-L-thyronine"/>
    <property type="evidence" value="ECO:0000270"/>
    <property type="project" value="RGD"/>
</dbReference>
<dbReference type="GO" id="GO:0001701">
    <property type="term" value="P:in utero embryonic development"/>
    <property type="evidence" value="ECO:0000266"/>
    <property type="project" value="RGD"/>
</dbReference>
<dbReference type="GO" id="GO:0006936">
    <property type="term" value="P:muscle contraction"/>
    <property type="evidence" value="ECO:0000315"/>
    <property type="project" value="RGD"/>
</dbReference>
<dbReference type="GO" id="GO:0030049">
    <property type="term" value="P:muscle filament sliding"/>
    <property type="evidence" value="ECO:0000266"/>
    <property type="project" value="RGD"/>
</dbReference>
<dbReference type="GO" id="GO:0030239">
    <property type="term" value="P:myofibril assembly"/>
    <property type="evidence" value="ECO:0000266"/>
    <property type="project" value="RGD"/>
</dbReference>
<dbReference type="GO" id="GO:0008217">
    <property type="term" value="P:regulation of blood pressure"/>
    <property type="evidence" value="ECO:0000266"/>
    <property type="project" value="RGD"/>
</dbReference>
<dbReference type="GO" id="GO:0008016">
    <property type="term" value="P:regulation of heart contraction"/>
    <property type="evidence" value="ECO:0000266"/>
    <property type="project" value="RGD"/>
</dbReference>
<dbReference type="GO" id="GO:0060420">
    <property type="term" value="P:regulation of heart growth"/>
    <property type="evidence" value="ECO:0000266"/>
    <property type="project" value="RGD"/>
</dbReference>
<dbReference type="GO" id="GO:0002027">
    <property type="term" value="P:regulation of heart rate"/>
    <property type="evidence" value="ECO:0000266"/>
    <property type="project" value="RGD"/>
</dbReference>
<dbReference type="GO" id="GO:0002026">
    <property type="term" value="P:regulation of the force of heart contraction"/>
    <property type="evidence" value="ECO:0000266"/>
    <property type="project" value="RGD"/>
</dbReference>
<dbReference type="GO" id="GO:0045214">
    <property type="term" value="P:sarcomere organization"/>
    <property type="evidence" value="ECO:0000266"/>
    <property type="project" value="RGD"/>
</dbReference>
<dbReference type="GO" id="GO:0006941">
    <property type="term" value="P:striated muscle contraction"/>
    <property type="evidence" value="ECO:0000266"/>
    <property type="project" value="RGD"/>
</dbReference>
<dbReference type="GO" id="GO:0055010">
    <property type="term" value="P:ventricular cardiac muscle tissue morphogenesis"/>
    <property type="evidence" value="ECO:0000266"/>
    <property type="project" value="RGD"/>
</dbReference>
<dbReference type="GO" id="GO:0007522">
    <property type="term" value="P:visceral muscle development"/>
    <property type="evidence" value="ECO:0000266"/>
    <property type="project" value="RGD"/>
</dbReference>
<dbReference type="CDD" id="cd01377">
    <property type="entry name" value="MYSc_class_II"/>
    <property type="match status" value="1"/>
</dbReference>
<dbReference type="FunFam" id="1.10.10.820:FF:000001">
    <property type="entry name" value="Myosin heavy chain"/>
    <property type="match status" value="1"/>
</dbReference>
<dbReference type="FunFam" id="1.20.5.340:FF:000002">
    <property type="entry name" value="Myosin heavy chain"/>
    <property type="match status" value="1"/>
</dbReference>
<dbReference type="FunFam" id="1.20.5.340:FF:000003">
    <property type="entry name" value="Myosin heavy chain"/>
    <property type="match status" value="1"/>
</dbReference>
<dbReference type="FunFam" id="1.20.5.340:FF:000004">
    <property type="entry name" value="Myosin heavy chain"/>
    <property type="match status" value="1"/>
</dbReference>
<dbReference type="FunFam" id="1.20.5.340:FF:000006">
    <property type="entry name" value="Myosin heavy chain"/>
    <property type="match status" value="1"/>
</dbReference>
<dbReference type="FunFam" id="1.20.5.340:FF:000013">
    <property type="entry name" value="Myosin heavy chain"/>
    <property type="match status" value="1"/>
</dbReference>
<dbReference type="FunFam" id="1.20.5.370:FF:000001">
    <property type="entry name" value="Myosin heavy chain"/>
    <property type="match status" value="1"/>
</dbReference>
<dbReference type="FunFam" id="1.20.5.370:FF:000002">
    <property type="entry name" value="Myosin heavy chain"/>
    <property type="match status" value="1"/>
</dbReference>
<dbReference type="FunFam" id="1.20.5.370:FF:000003">
    <property type="entry name" value="Myosin heavy chain"/>
    <property type="match status" value="1"/>
</dbReference>
<dbReference type="FunFam" id="1.20.5.370:FF:000007">
    <property type="entry name" value="Myosin heavy chain"/>
    <property type="match status" value="1"/>
</dbReference>
<dbReference type="FunFam" id="1.20.5.370:FF:000008">
    <property type="entry name" value="Myosin heavy chain"/>
    <property type="match status" value="1"/>
</dbReference>
<dbReference type="FunFam" id="1.20.5.4820:FF:000001">
    <property type="entry name" value="Myosin heavy chain"/>
    <property type="match status" value="1"/>
</dbReference>
<dbReference type="FunFam" id="1.20.58.530:FF:000001">
    <property type="entry name" value="Myosin heavy chain"/>
    <property type="match status" value="1"/>
</dbReference>
<dbReference type="FunFam" id="2.30.30.360:FF:000001">
    <property type="entry name" value="Myosin heavy chain"/>
    <property type="match status" value="1"/>
</dbReference>
<dbReference type="FunFam" id="1.20.120.720:FF:000001">
    <property type="entry name" value="Myosin heavy chain, muscle"/>
    <property type="match status" value="1"/>
</dbReference>
<dbReference type="FunFam" id="3.40.850.10:FF:000115">
    <property type="entry name" value="Myosin heavy polypeptide 6"/>
    <property type="match status" value="1"/>
</dbReference>
<dbReference type="FunFam" id="3.40.850.10:FF:000101">
    <property type="entry name" value="Slow myosin heavy chain 2"/>
    <property type="match status" value="1"/>
</dbReference>
<dbReference type="Gene3D" id="1.10.10.820">
    <property type="match status" value="1"/>
</dbReference>
<dbReference type="Gene3D" id="1.20.5.340">
    <property type="match status" value="4"/>
</dbReference>
<dbReference type="Gene3D" id="1.20.5.370">
    <property type="match status" value="4"/>
</dbReference>
<dbReference type="Gene3D" id="1.20.5.4820">
    <property type="match status" value="1"/>
</dbReference>
<dbReference type="Gene3D" id="1.20.58.530">
    <property type="match status" value="1"/>
</dbReference>
<dbReference type="Gene3D" id="6.10.250.2420">
    <property type="match status" value="1"/>
</dbReference>
<dbReference type="Gene3D" id="3.40.850.10">
    <property type="entry name" value="Kinesin motor domain"/>
    <property type="match status" value="1"/>
</dbReference>
<dbReference type="Gene3D" id="2.30.30.360">
    <property type="entry name" value="Myosin S1 fragment, N-terminal"/>
    <property type="match status" value="1"/>
</dbReference>
<dbReference type="Gene3D" id="1.20.120.720">
    <property type="entry name" value="Myosin VI head, motor domain, U50 subdomain"/>
    <property type="match status" value="1"/>
</dbReference>
<dbReference type="Gene3D" id="1.20.5.1160">
    <property type="entry name" value="Vasodilator-stimulated phosphoprotein"/>
    <property type="match status" value="1"/>
</dbReference>
<dbReference type="InterPro" id="IPR036961">
    <property type="entry name" value="Kinesin_motor_dom_sf"/>
</dbReference>
<dbReference type="InterPro" id="IPR001609">
    <property type="entry name" value="Myosin_head_motor_dom-like"/>
</dbReference>
<dbReference type="InterPro" id="IPR004009">
    <property type="entry name" value="Myosin_N"/>
</dbReference>
<dbReference type="InterPro" id="IPR008989">
    <property type="entry name" value="Myosin_S1_N"/>
</dbReference>
<dbReference type="InterPro" id="IPR002928">
    <property type="entry name" value="Myosin_tail"/>
</dbReference>
<dbReference type="InterPro" id="IPR027417">
    <property type="entry name" value="P-loop_NTPase"/>
</dbReference>
<dbReference type="InterPro" id="IPR014751">
    <property type="entry name" value="XRCC4-like_C"/>
</dbReference>
<dbReference type="PANTHER" id="PTHR45615">
    <property type="entry name" value="MYOSIN HEAVY CHAIN, NON-MUSCLE"/>
    <property type="match status" value="1"/>
</dbReference>
<dbReference type="PANTHER" id="PTHR45615:SF69">
    <property type="entry name" value="MYOSIN-6"/>
    <property type="match status" value="1"/>
</dbReference>
<dbReference type="Pfam" id="PF00063">
    <property type="entry name" value="Myosin_head"/>
    <property type="match status" value="1"/>
</dbReference>
<dbReference type="Pfam" id="PF02736">
    <property type="entry name" value="Myosin_N"/>
    <property type="match status" value="1"/>
</dbReference>
<dbReference type="Pfam" id="PF01576">
    <property type="entry name" value="Myosin_tail_1"/>
    <property type="match status" value="1"/>
</dbReference>
<dbReference type="PRINTS" id="PR00193">
    <property type="entry name" value="MYOSINHEAVY"/>
</dbReference>
<dbReference type="SMART" id="SM00242">
    <property type="entry name" value="MYSc"/>
    <property type="match status" value="1"/>
</dbReference>
<dbReference type="SUPFAM" id="SSF90257">
    <property type="entry name" value="Myosin rod fragments"/>
    <property type="match status" value="4"/>
</dbReference>
<dbReference type="SUPFAM" id="SSF52540">
    <property type="entry name" value="P-loop containing nucleoside triphosphate hydrolases"/>
    <property type="match status" value="1"/>
</dbReference>
<dbReference type="PROSITE" id="PS50096">
    <property type="entry name" value="IQ"/>
    <property type="match status" value="1"/>
</dbReference>
<dbReference type="PROSITE" id="PS51456">
    <property type="entry name" value="MYOSIN_MOTOR"/>
    <property type="match status" value="1"/>
</dbReference>
<dbReference type="PROSITE" id="PS51844">
    <property type="entry name" value="SH3_LIKE"/>
    <property type="match status" value="1"/>
</dbReference>
<sequence length="1938" mass="223508">MTDAQMADFGAARYLRKSEKERLEAQTRPFDIRTECFVPDDKEEYVKAKIVSREGGKVTAETENGKTVTVKEDQVMQQNPPKFDKIEDMAMLTFLHEPAVLYNLKERYAAWMIYTYSGLFCVTVNPYKWLPVYNAEVVAAYRGKKRSEAPPHIFSISDNAYQYMLTDRENQSILITGESGAGKTVNTKRVIQYFASIAAIGDRSKKDNPNANKGTLEDQIIQANPALEAFGNAKTVRNDNSSRFGKFIRIHFGATGKLASADIETYLLEKSRVIFQLKAERNYHIFYQILSNKKPELLDMLLVTNNPYDYAFVSQGEVSVASIDDSEELLATDSAFDVLGFTAEEKAGVYKLTGAIMHYGNMKFKQKQREEQAEPDGTEDADKSAYLMGLNSADLLKGLCHPRVKVGNEYVTKGQSVQQVYYSIGALAKSVYEKMFNWMVTRINATLETKQPRQYFIGVLDIAGFEIFDFNSFEQLCINFTNEKLQQFFNHHMFVLEQEEYKKEGIEWEFIDFGMDLQACIDLIEKPMGIMSILEEECMFPKATDMTFKAKLYDNHLGKSNNFQKPRNVKGKQEAHFSLVHYAGTVDYNILGWLEKNKDPLNETVVGLYQKSSLKLMATLFSTYASADTGDSGKGKGGKKKGSSFQTVSALHRENLNKLMTNLRTTHPHFVRCIIPNERKAPGVMDNPLVMHQLRCNGVLEGIRICRKGFPNRILYGDFRQRYRILNPAAIPEGQFIDSGKGAEKLLGSLDIDHNQYKFGHTKVFFKAGLLGLLEEMRDERLSRIITRIQAQARGQLMRIEFKKMVERRDALLVIQWNIRAFMGVKNWPWMKLYFKIKPLLKSAETEKEMANMKEEFGRVKDALEKSEARRKELEEKMVSLLQEKNDLQLQVQAEQDNLADAEERCDQLIKNKIQLEAKVKEMTERLEDEEEMNAELTAKKRKLEDECSELKKDIDDLELTLAKVEKEKHATENKVKNLTEEMAGLDEIIAKLTKEKKALQEAHQQALDDLQAEEDKVNTLTKSKVKLEQQVDDLEGSLEQEKKVRMDLERAKRKLEGDLKLTQESIMDLENDKLQLEEKLKKKEFDISQQNSKIEDEQALALQLQKKLKENQARIEELEEELEAERTARAKVEKLRSDLTRELEEISERLEEAGGATSVQIEMNKKREAEFQKMRRDLEEATLQHEATAAALRKKHADSVAELGEQIDNLQRVKQKLEKEKSEFKLELDDVTSHMEQIIKAKANLEKVSRTLEDQANEYRVKLEEAQRSLNDFTTQRAKLQTENGELARQLEEKEALIWQLTRGKLSYTQQMEDLKRQLEEEGKAKNALAHALQSARHDCDLLREQYEEEMEAKAELQRVLSKANSEVAQWRTKYETDAIQRTEELEEAKKKLAQRLQDAEEAVEAVNAKCSSLEKTKHRLQNEIEDLMVDVERSNAAAAALDKKQRNFDKILAEWKQKYEESQSELESSQKEARSLSTELFKLKNAYEESLEHLETFKRENKNLQEEISDLTEQLGEGGKNVHELEKIRKQLEVEKLELQSALEEAEASLEHEEGKILRAQLEFNQIKAEIERKLAEKDEEMEQAKRNHLRVVDSLQTSLDAETRSRNEALRVKKKMEGDLNEMEIQLSQANRIASEAQKHLKNAQAHLKDTQLQLDDAVRANDDLKENIAIVERRNTLLQAELEELRAVVEQTERSRKLAEQELIETSERVQLLHSQNTSLINQKKKMDADLSQLQTEVEEAVQECRNAEEKAKKAITDAAMMAEELKKEQDTSAHLERMKKNMEQTIKDLQHRLDEAEQIALKGGKKQLQKLEARVRELENELEAEQKRNAESVKGMRKSERRIKELTYQTEEDKKNLVRLQDLVDKLQLKVKAYKRQAEEAEEQANTNLSKFRKVQHELDEAEERADIAESQVNKLRAKSRDIGAKQKMHDEE</sequence>
<organism>
    <name type="scientific">Rattus norvegicus</name>
    <name type="common">Rat</name>
    <dbReference type="NCBI Taxonomy" id="10116"/>
    <lineage>
        <taxon>Eukaryota</taxon>
        <taxon>Metazoa</taxon>
        <taxon>Chordata</taxon>
        <taxon>Craniata</taxon>
        <taxon>Vertebrata</taxon>
        <taxon>Euteleostomi</taxon>
        <taxon>Mammalia</taxon>
        <taxon>Eutheria</taxon>
        <taxon>Euarchontoglires</taxon>
        <taxon>Glires</taxon>
        <taxon>Rodentia</taxon>
        <taxon>Myomorpha</taxon>
        <taxon>Muroidea</taxon>
        <taxon>Muridae</taxon>
        <taxon>Murinae</taxon>
        <taxon>Rattus</taxon>
    </lineage>
</organism>
<comment type="function">
    <text>Muscle contraction.</text>
</comment>
<comment type="subunit">
    <text>Muscle myosin is a hexameric protein that consists of 2 heavy chain subunits (MHC), 2 alkali light chain subunits (MLC) and 2 regulatory light chain subunits (MLC-2).</text>
</comment>
<comment type="interaction">
    <interactant intactId="EBI-6122328">
        <id>P02563</id>
    </interactant>
    <interactant intactId="EBI-6122328">
        <id>P02563</id>
        <label>Myh6</label>
    </interactant>
    <organismsDiffer>false</organismsDiffer>
    <experiments>6</experiments>
</comment>
<comment type="subcellular location">
    <subcellularLocation>
        <location>Cytoplasm</location>
        <location>Myofibril</location>
    </subcellularLocation>
    <text>Thick filaments of the myofibrils.</text>
</comment>
<comment type="domain">
    <text>The rodlike tail sequence is highly repetitive, showing cycles of a 28-residue repeat pattern composed of 4 heptapeptides, characteristic for alpha-helical coiled coils.</text>
</comment>
<comment type="domain">
    <text evidence="7">Limited proteolysis of myosin heavy chain produces 1 light meromyosin (LMM) and 1 heavy meromyosin (HMM). HMM can be further cleaved into 2 globular subfragments (S1) and 1 rod-shaped subfragment (S2).</text>
</comment>
<comment type="miscellaneous">
    <text>The cardiac alpha isoform is a 'fast' ATPase myosin, while the beta isoform is a 'slow' ATPase.</text>
</comment>
<comment type="similarity">
    <text evidence="7">Belongs to the TRAFAC class myosin-kinesin ATPase superfamily. Myosin family.</text>
</comment>
<comment type="caution">
    <text evidence="7">Represents a conventional myosin. This protein should not be confused with the unconventional myosin-6 (MYO6).</text>
</comment>